<feature type="chain" id="PRO_0000319134" description="Formate-dependent phosphoribosylglycinamide formyltransferase">
    <location>
        <begin position="1"/>
        <end position="404"/>
    </location>
</feature>
<feature type="domain" description="ATP-grasp" evidence="1">
    <location>
        <begin position="123"/>
        <end position="318"/>
    </location>
</feature>
<feature type="binding site" evidence="1">
    <location>
        <begin position="25"/>
        <end position="26"/>
    </location>
    <ligand>
        <name>N(1)-(5-phospho-beta-D-ribosyl)glycinamide</name>
        <dbReference type="ChEBI" id="CHEBI:143788"/>
    </ligand>
</feature>
<feature type="binding site" evidence="1">
    <location>
        <position position="85"/>
    </location>
    <ligand>
        <name>N(1)-(5-phospho-beta-D-ribosyl)glycinamide</name>
        <dbReference type="ChEBI" id="CHEBI:143788"/>
    </ligand>
</feature>
<feature type="binding site" evidence="1">
    <location>
        <position position="118"/>
    </location>
    <ligand>
        <name>ATP</name>
        <dbReference type="ChEBI" id="CHEBI:30616"/>
    </ligand>
</feature>
<feature type="binding site" evidence="1">
    <location>
        <position position="159"/>
    </location>
    <ligand>
        <name>ATP</name>
        <dbReference type="ChEBI" id="CHEBI:30616"/>
    </ligand>
</feature>
<feature type="binding site" evidence="1">
    <location>
        <begin position="164"/>
        <end position="169"/>
    </location>
    <ligand>
        <name>ATP</name>
        <dbReference type="ChEBI" id="CHEBI:30616"/>
    </ligand>
</feature>
<feature type="binding site" evidence="1">
    <location>
        <begin position="199"/>
        <end position="202"/>
    </location>
    <ligand>
        <name>ATP</name>
        <dbReference type="ChEBI" id="CHEBI:30616"/>
    </ligand>
</feature>
<feature type="binding site" evidence="1">
    <location>
        <position position="207"/>
    </location>
    <ligand>
        <name>ATP</name>
        <dbReference type="ChEBI" id="CHEBI:30616"/>
    </ligand>
</feature>
<feature type="binding site" evidence="1">
    <location>
        <position position="277"/>
    </location>
    <ligand>
        <name>Mg(2+)</name>
        <dbReference type="ChEBI" id="CHEBI:18420"/>
    </ligand>
</feature>
<feature type="binding site" evidence="1">
    <location>
        <position position="289"/>
    </location>
    <ligand>
        <name>Mg(2+)</name>
        <dbReference type="ChEBI" id="CHEBI:18420"/>
    </ligand>
</feature>
<feature type="binding site" evidence="1">
    <location>
        <position position="296"/>
    </location>
    <ligand>
        <name>N(1)-(5-phospho-beta-D-ribosyl)glycinamide</name>
        <dbReference type="ChEBI" id="CHEBI:143788"/>
    </ligand>
</feature>
<feature type="binding site" evidence="1">
    <location>
        <position position="365"/>
    </location>
    <ligand>
        <name>N(1)-(5-phospho-beta-D-ribosyl)glycinamide</name>
        <dbReference type="ChEBI" id="CHEBI:143788"/>
    </ligand>
</feature>
<feature type="binding site" evidence="1">
    <location>
        <begin position="372"/>
        <end position="373"/>
    </location>
    <ligand>
        <name>N(1)-(5-phospho-beta-D-ribosyl)glycinamide</name>
        <dbReference type="ChEBI" id="CHEBI:143788"/>
    </ligand>
</feature>
<protein>
    <recommendedName>
        <fullName evidence="1">Formate-dependent phosphoribosylglycinamide formyltransferase</fullName>
        <ecNumber evidence="1">6.3.1.21</ecNumber>
    </recommendedName>
    <alternativeName>
        <fullName evidence="1">5'-phosphoribosylglycinamide transformylase 2</fullName>
    </alternativeName>
    <alternativeName>
        <fullName evidence="1">Formate-dependent GAR transformylase</fullName>
    </alternativeName>
    <alternativeName>
        <fullName evidence="1">GAR transformylase 2</fullName>
        <shortName evidence="1">GART 2</shortName>
    </alternativeName>
    <alternativeName>
        <fullName evidence="1">Non-folate glycinamide ribonucleotide transformylase</fullName>
    </alternativeName>
    <alternativeName>
        <fullName evidence="1">Phosphoribosylglycinamide formyltransferase 2</fullName>
    </alternativeName>
</protein>
<reference key="1">
    <citation type="submission" date="2006-05" db="EMBL/GenBank/DDBJ databases">
        <title>Complete sequence of chromosome 1 of Burkholderia cenocepacia AU 1054.</title>
        <authorList>
            <consortium name="US DOE Joint Genome Institute"/>
            <person name="Copeland A."/>
            <person name="Lucas S."/>
            <person name="Lapidus A."/>
            <person name="Barry K."/>
            <person name="Detter J.C."/>
            <person name="Glavina del Rio T."/>
            <person name="Hammon N."/>
            <person name="Israni S."/>
            <person name="Dalin E."/>
            <person name="Tice H."/>
            <person name="Pitluck S."/>
            <person name="Chain P."/>
            <person name="Malfatti S."/>
            <person name="Shin M."/>
            <person name="Vergez L."/>
            <person name="Schmutz J."/>
            <person name="Larimer F."/>
            <person name="Land M."/>
            <person name="Hauser L."/>
            <person name="Kyrpides N."/>
            <person name="Lykidis A."/>
            <person name="LiPuma J.J."/>
            <person name="Konstantinidis K."/>
            <person name="Tiedje J.M."/>
            <person name="Richardson P."/>
        </authorList>
    </citation>
    <scope>NUCLEOTIDE SEQUENCE [LARGE SCALE GENOMIC DNA]</scope>
    <source>
        <strain>AU 1054</strain>
    </source>
</reference>
<sequence length="404" mass="42990">MQIGQRLGTPLSPSATRVMLLGAGELGKEVIIALQRLGVEVVAVDRYPDAPGHQVAHRAHVIDMTDPAALRAIVEAERPHLIVPEIEAIATDALAAIEAAGLAEVIPTARATQLTMNREGIRRLAAEELGLPTSPYAFADSFEAFSAAVAKIGMPCVVKPVMSSSGKGQSVVKTDADVKPAWDYAMAGGRVNHGRVIVEGFVDFDYEITQLTVRAIDPATLDTRTYFCEPVGHVQVAGDYVESWQPQPMSAVALEKSREIAHKVTEALGGRGLFGVELFVRGDDVWFSEVSPRPHDTGLVTLASQRQSEFELHARAILGLPVDPALGTPAASAVIYGGLDERGIAFEGVRDALAVPGADLRLFGKPESFAKRRMGVALATGATVDEARERAKRAAAAVRPVSAR</sequence>
<comment type="function">
    <text evidence="1">Involved in the de novo purine biosynthesis. Catalyzes the transfer of formate to 5-phospho-ribosyl-glycinamide (GAR), producing 5-phospho-ribosyl-N-formylglycinamide (FGAR). Formate is provided by PurU via hydrolysis of 10-formyl-tetrahydrofolate.</text>
</comment>
<comment type="catalytic activity">
    <reaction evidence="1">
        <text>N(1)-(5-phospho-beta-D-ribosyl)glycinamide + formate + ATP = N(2)-formyl-N(1)-(5-phospho-beta-D-ribosyl)glycinamide + ADP + phosphate + H(+)</text>
        <dbReference type="Rhea" id="RHEA:24829"/>
        <dbReference type="ChEBI" id="CHEBI:15378"/>
        <dbReference type="ChEBI" id="CHEBI:15740"/>
        <dbReference type="ChEBI" id="CHEBI:30616"/>
        <dbReference type="ChEBI" id="CHEBI:43474"/>
        <dbReference type="ChEBI" id="CHEBI:143788"/>
        <dbReference type="ChEBI" id="CHEBI:147286"/>
        <dbReference type="ChEBI" id="CHEBI:456216"/>
        <dbReference type="EC" id="6.3.1.21"/>
    </reaction>
    <physiologicalReaction direction="left-to-right" evidence="1">
        <dbReference type="Rhea" id="RHEA:24830"/>
    </physiologicalReaction>
</comment>
<comment type="pathway">
    <text evidence="1">Purine metabolism; IMP biosynthesis via de novo pathway; N(2)-formyl-N(1)-(5-phospho-D-ribosyl)glycinamide from N(1)-(5-phospho-D-ribosyl)glycinamide (formate route): step 1/1.</text>
</comment>
<comment type="subunit">
    <text evidence="1">Homodimer.</text>
</comment>
<comment type="similarity">
    <text evidence="1">Belongs to the PurK/PurT family.</text>
</comment>
<keyword id="KW-0067">ATP-binding</keyword>
<keyword id="KW-0436">Ligase</keyword>
<keyword id="KW-0460">Magnesium</keyword>
<keyword id="KW-0479">Metal-binding</keyword>
<keyword id="KW-0547">Nucleotide-binding</keyword>
<keyword id="KW-0658">Purine biosynthesis</keyword>
<name>PURT_BURO1</name>
<gene>
    <name evidence="1" type="primary">purT</name>
    <name type="ordered locus">Bcen_1707</name>
</gene>
<organism>
    <name type="scientific">Burkholderia orbicola (strain AU 1054)</name>
    <dbReference type="NCBI Taxonomy" id="331271"/>
    <lineage>
        <taxon>Bacteria</taxon>
        <taxon>Pseudomonadati</taxon>
        <taxon>Pseudomonadota</taxon>
        <taxon>Betaproteobacteria</taxon>
        <taxon>Burkholderiales</taxon>
        <taxon>Burkholderiaceae</taxon>
        <taxon>Burkholderia</taxon>
        <taxon>Burkholderia cepacia complex</taxon>
        <taxon>Burkholderia orbicola</taxon>
    </lineage>
</organism>
<proteinExistence type="inferred from homology"/>
<dbReference type="EC" id="6.3.1.21" evidence="1"/>
<dbReference type="EMBL" id="CP000378">
    <property type="protein sequence ID" value="ABF76611.1"/>
    <property type="molecule type" value="Genomic_DNA"/>
</dbReference>
<dbReference type="SMR" id="Q1BUU4"/>
<dbReference type="HOGENOM" id="CLU_011534_1_3_4"/>
<dbReference type="UniPathway" id="UPA00074">
    <property type="reaction ID" value="UER00127"/>
</dbReference>
<dbReference type="GO" id="GO:0005829">
    <property type="term" value="C:cytosol"/>
    <property type="evidence" value="ECO:0007669"/>
    <property type="project" value="TreeGrafter"/>
</dbReference>
<dbReference type="GO" id="GO:0005524">
    <property type="term" value="F:ATP binding"/>
    <property type="evidence" value="ECO:0007669"/>
    <property type="project" value="UniProtKB-UniRule"/>
</dbReference>
<dbReference type="GO" id="GO:0000287">
    <property type="term" value="F:magnesium ion binding"/>
    <property type="evidence" value="ECO:0007669"/>
    <property type="project" value="InterPro"/>
</dbReference>
<dbReference type="GO" id="GO:0043815">
    <property type="term" value="F:phosphoribosylglycinamide formyltransferase 2 activity"/>
    <property type="evidence" value="ECO:0007669"/>
    <property type="project" value="UniProtKB-UniRule"/>
</dbReference>
<dbReference type="GO" id="GO:0004644">
    <property type="term" value="F:phosphoribosylglycinamide formyltransferase activity"/>
    <property type="evidence" value="ECO:0007669"/>
    <property type="project" value="InterPro"/>
</dbReference>
<dbReference type="GO" id="GO:0006189">
    <property type="term" value="P:'de novo' IMP biosynthetic process"/>
    <property type="evidence" value="ECO:0007669"/>
    <property type="project" value="UniProtKB-UniRule"/>
</dbReference>
<dbReference type="FunFam" id="3.30.1490.20:FF:000013">
    <property type="entry name" value="Formate-dependent phosphoribosylglycinamide formyltransferase"/>
    <property type="match status" value="1"/>
</dbReference>
<dbReference type="FunFam" id="3.40.50.20:FF:000007">
    <property type="entry name" value="Formate-dependent phosphoribosylglycinamide formyltransferase"/>
    <property type="match status" value="1"/>
</dbReference>
<dbReference type="Gene3D" id="3.40.50.20">
    <property type="match status" value="1"/>
</dbReference>
<dbReference type="Gene3D" id="3.30.1490.20">
    <property type="entry name" value="ATP-grasp fold, A domain"/>
    <property type="match status" value="1"/>
</dbReference>
<dbReference type="Gene3D" id="3.30.470.20">
    <property type="entry name" value="ATP-grasp fold, B domain"/>
    <property type="match status" value="1"/>
</dbReference>
<dbReference type="HAMAP" id="MF_01643">
    <property type="entry name" value="PurT"/>
    <property type="match status" value="1"/>
</dbReference>
<dbReference type="InterPro" id="IPR011761">
    <property type="entry name" value="ATP-grasp"/>
</dbReference>
<dbReference type="InterPro" id="IPR003135">
    <property type="entry name" value="ATP-grasp_carboxylate-amine"/>
</dbReference>
<dbReference type="InterPro" id="IPR013815">
    <property type="entry name" value="ATP_grasp_subdomain_1"/>
</dbReference>
<dbReference type="InterPro" id="IPR016185">
    <property type="entry name" value="PreATP-grasp_dom_sf"/>
</dbReference>
<dbReference type="InterPro" id="IPR005862">
    <property type="entry name" value="PurT"/>
</dbReference>
<dbReference type="InterPro" id="IPR054350">
    <property type="entry name" value="PurT/PurK_preATP-grasp"/>
</dbReference>
<dbReference type="InterPro" id="IPR048740">
    <property type="entry name" value="PurT_C"/>
</dbReference>
<dbReference type="InterPro" id="IPR011054">
    <property type="entry name" value="Rudment_hybrid_motif"/>
</dbReference>
<dbReference type="NCBIfam" id="NF006766">
    <property type="entry name" value="PRK09288.1"/>
    <property type="match status" value="1"/>
</dbReference>
<dbReference type="NCBIfam" id="TIGR01142">
    <property type="entry name" value="purT"/>
    <property type="match status" value="1"/>
</dbReference>
<dbReference type="PANTHER" id="PTHR43055">
    <property type="entry name" value="FORMATE-DEPENDENT PHOSPHORIBOSYLGLYCINAMIDE FORMYLTRANSFERASE"/>
    <property type="match status" value="1"/>
</dbReference>
<dbReference type="PANTHER" id="PTHR43055:SF1">
    <property type="entry name" value="FORMATE-DEPENDENT PHOSPHORIBOSYLGLYCINAMIDE FORMYLTRANSFERASE"/>
    <property type="match status" value="1"/>
</dbReference>
<dbReference type="Pfam" id="PF02222">
    <property type="entry name" value="ATP-grasp"/>
    <property type="match status" value="1"/>
</dbReference>
<dbReference type="Pfam" id="PF21244">
    <property type="entry name" value="PurT_C"/>
    <property type="match status" value="1"/>
</dbReference>
<dbReference type="Pfam" id="PF22660">
    <property type="entry name" value="RS_preATP-grasp-like"/>
    <property type="match status" value="1"/>
</dbReference>
<dbReference type="SUPFAM" id="SSF56059">
    <property type="entry name" value="Glutathione synthetase ATP-binding domain-like"/>
    <property type="match status" value="1"/>
</dbReference>
<dbReference type="SUPFAM" id="SSF52440">
    <property type="entry name" value="PreATP-grasp domain"/>
    <property type="match status" value="1"/>
</dbReference>
<dbReference type="SUPFAM" id="SSF51246">
    <property type="entry name" value="Rudiment single hybrid motif"/>
    <property type="match status" value="1"/>
</dbReference>
<dbReference type="PROSITE" id="PS50975">
    <property type="entry name" value="ATP_GRASP"/>
    <property type="match status" value="1"/>
</dbReference>
<evidence type="ECO:0000255" key="1">
    <source>
        <dbReference type="HAMAP-Rule" id="MF_01643"/>
    </source>
</evidence>
<accession>Q1BUU4</accession>